<sequence>MHGAGEQQQRYRYNARSDEQHHHPSTSSHQYQQQGARQMHQMHPIQATLMCTPTTTSAAASTSSSGGSNSSGGSGGHRQQGNILRIGNSIKIGDNILEPAGTLVFSQADGTPWTGQRIVVNGSTHAVVKANLFPIGTTPPVLNMQSNQNWYMNQPSGTVPMSSNAPATTSSATPDSGIQSVPTSPPSPSYAMMNDVDIGDHDDEEDDDGPADFTDMPLLKPVDEDDDCYDVPCTSEGPPPNNSNPAITTIPSSCSTPAPPKESLPTGMNVEEWGSFLIASNMDREEIVRRLMAHDPEMAKAIAMRIRELSAEESKKKKDMEAEVSSTTPTTPRARGTRTRNKCATRSTNSPDVTTSNLPEEPSTSTMGLVKENEDVEKVEGKRRGRKPKKRRGFHKESFEDLESDAKKSKAEQHEDHLPEASCSSRPESVIPPPVDPIQFRLKVREMMERKLEQLTQKMSEDMTELRLSHLTSSKMVNGERGKRRESFLRQLNEQSKKLRKGGMLGRKRLRMFMTESDILEENKDNIKKEVKEESTPPPTKLRGRLPSRRTREPSEIVNPEPVEKKFNGEYFEITKSVPSSDDIIPLWMAPSLTCGCTKGACTSDMDCLNRALRVQCSSDCSVPYCSNRRFWKEDCGNKLCVSNGPRSKRVLKTKIARRAGEFLCEYAGEVITREQAQEKFAQDRDPRIIAIAAHLFVDATKRSNIARFIKHSCKPNSRLEVWSVNGFYRAGVFALSDLNPNAEITVDKSDLLPFDMACNCGATECKRVIRGVRWRCADPNEKIVTRRFVIRNRRKTIERSSHSGLPAILQTPMDENSSIRLKMKQVLAAFAFRVRKIDGSMSRTMLPHYTLIIKFLKTKGNNPNPVEFVSLFRKWLEAIDDDDLERAFVAIESHYMSSSILSSSLQSKKAKDNAPRARALSTSCPSPVPSKRGDADLSYLESLYPIGSYDPDDAWESYSTNKKGNAVRCICGALDEEGTMVQCDTCHFWLHVDCCQYVVRSNEKAQKSKNPPSDDGEYICDFCTNKQNGLRPSADVKLTEQPDVRFENCDYYRSLINRRGIQVVLNETVYVNRVLPEDHKAMLRNLREEKKGSKQKDTNKYRFPKAATSPLPIEKVDRKNARIFRVERLFVCPGNNRFVFGSFYAWPHETYADAGRVFSKKEVFATPYYETLPLDEVIGRCLVLDTATWCKGRPKVPKFKEDDVFLCEMQIGKTQRVFEKVPPKNRYPINTNSYVFTEFTHPKKVVRDFRPYDPSNPSPKPPKTSSIPSTSSIDPPQSSSDGLPEVDTKKLSKRHIQRVLKRLVKNGSRRS</sequence>
<dbReference type="EC" id="2.1.1.-"/>
<dbReference type="EMBL" id="AF163019">
    <property type="protein sequence ID" value="AAD49324.1"/>
    <property type="molecule type" value="mRNA"/>
</dbReference>
<dbReference type="EMBL" id="FO081191">
    <property type="protein sequence ID" value="CCD69785.1"/>
    <property type="molecule type" value="Genomic_DNA"/>
</dbReference>
<dbReference type="PIR" id="T32758">
    <property type="entry name" value="T32758"/>
</dbReference>
<dbReference type="RefSeq" id="NP_491206.1">
    <property type="nucleotide sequence ID" value="NM_058805.8"/>
</dbReference>
<dbReference type="SMR" id="O44757"/>
<dbReference type="BioGRID" id="57313">
    <property type="interactions" value="7"/>
</dbReference>
<dbReference type="FunCoup" id="O44757">
    <property type="interactions" value="176"/>
</dbReference>
<dbReference type="IntAct" id="O44757">
    <property type="interactions" value="3"/>
</dbReference>
<dbReference type="MINT" id="O44757"/>
<dbReference type="STRING" id="6239.T12F5.4.1"/>
<dbReference type="PaxDb" id="6239-T12F5.4"/>
<dbReference type="EnsemblMetazoa" id="T12F5.4.1">
    <property type="protein sequence ID" value="T12F5.4.1"/>
    <property type="gene ID" value="WBGene00003040"/>
</dbReference>
<dbReference type="GeneID" id="266825"/>
<dbReference type="KEGG" id="cel:CELE_T12F5.4"/>
<dbReference type="UCSC" id="T12F5.4">
    <property type="organism name" value="c. elegans"/>
</dbReference>
<dbReference type="AGR" id="WB:WBGene00003040"/>
<dbReference type="CTD" id="266825"/>
<dbReference type="WormBase" id="T12F5.4">
    <property type="protein sequence ID" value="CE13601"/>
    <property type="gene ID" value="WBGene00003040"/>
    <property type="gene designation" value="lin-59"/>
</dbReference>
<dbReference type="eggNOG" id="KOG1083">
    <property type="taxonomic scope" value="Eukaryota"/>
</dbReference>
<dbReference type="HOGENOM" id="CLU_006192_0_0_1"/>
<dbReference type="InParanoid" id="O44757"/>
<dbReference type="OMA" id="GACTSDM"/>
<dbReference type="OrthoDB" id="422362at2759"/>
<dbReference type="PhylomeDB" id="O44757"/>
<dbReference type="PRO" id="PR:O44757"/>
<dbReference type="Proteomes" id="UP000001940">
    <property type="component" value="Chromosome I"/>
</dbReference>
<dbReference type="Bgee" id="WBGene00003040">
    <property type="expression patterns" value="Expressed in pharyngeal muscle cell (C elegans) and 9 other cell types or tissues"/>
</dbReference>
<dbReference type="GO" id="GO:0000785">
    <property type="term" value="C:chromatin"/>
    <property type="evidence" value="ECO:0000318"/>
    <property type="project" value="GO_Central"/>
</dbReference>
<dbReference type="GO" id="GO:0005634">
    <property type="term" value="C:nucleus"/>
    <property type="evidence" value="ECO:0000318"/>
    <property type="project" value="GO_Central"/>
</dbReference>
<dbReference type="GO" id="GO:0003682">
    <property type="term" value="F:chromatin binding"/>
    <property type="evidence" value="ECO:0007669"/>
    <property type="project" value="InterPro"/>
</dbReference>
<dbReference type="GO" id="GO:0046975">
    <property type="term" value="F:histone H3K36 methyltransferase activity"/>
    <property type="evidence" value="ECO:0000318"/>
    <property type="project" value="GO_Central"/>
</dbReference>
<dbReference type="GO" id="GO:0008270">
    <property type="term" value="F:zinc ion binding"/>
    <property type="evidence" value="ECO:0007669"/>
    <property type="project" value="UniProtKB-KW"/>
</dbReference>
<dbReference type="GO" id="GO:0001715">
    <property type="term" value="P:ectodermal cell fate specification"/>
    <property type="evidence" value="ECO:0000315"/>
    <property type="project" value="WormBase"/>
</dbReference>
<dbReference type="GO" id="GO:0018991">
    <property type="term" value="P:egg-laying behavior"/>
    <property type="evidence" value="ECO:0000315"/>
    <property type="project" value="WormBase"/>
</dbReference>
<dbReference type="GO" id="GO:0009792">
    <property type="term" value="P:embryo development ending in birth or egg hatching"/>
    <property type="evidence" value="ECO:0000315"/>
    <property type="project" value="WormBase"/>
</dbReference>
<dbReference type="GO" id="GO:0048566">
    <property type="term" value="P:embryonic digestive tract development"/>
    <property type="evidence" value="ECO:0000315"/>
    <property type="project" value="WormBase"/>
</dbReference>
<dbReference type="GO" id="GO:0040011">
    <property type="term" value="P:locomotion"/>
    <property type="evidence" value="ECO:0000315"/>
    <property type="project" value="WormBase"/>
</dbReference>
<dbReference type="GO" id="GO:0032259">
    <property type="term" value="P:methylation"/>
    <property type="evidence" value="ECO:0007669"/>
    <property type="project" value="UniProtKB-KW"/>
</dbReference>
<dbReference type="GO" id="GO:0002119">
    <property type="term" value="P:nematode larval development"/>
    <property type="evidence" value="ECO:0000315"/>
    <property type="project" value="WormBase"/>
</dbReference>
<dbReference type="GO" id="GO:0045138">
    <property type="term" value="P:nematode male tail tip morphogenesis"/>
    <property type="evidence" value="ECO:0000315"/>
    <property type="project" value="WormBase"/>
</dbReference>
<dbReference type="GO" id="GO:0045944">
    <property type="term" value="P:positive regulation of transcription by RNA polymerase II"/>
    <property type="evidence" value="ECO:0000315"/>
    <property type="project" value="WormBase"/>
</dbReference>
<dbReference type="GO" id="GO:0006355">
    <property type="term" value="P:regulation of DNA-templated transcription"/>
    <property type="evidence" value="ECO:0000318"/>
    <property type="project" value="GO_Central"/>
</dbReference>
<dbReference type="GO" id="GO:0040014">
    <property type="term" value="P:regulation of multicellular organism growth"/>
    <property type="evidence" value="ECO:0000315"/>
    <property type="project" value="WormBase"/>
</dbReference>
<dbReference type="CDD" id="cd04717">
    <property type="entry name" value="BAH_polybromo"/>
    <property type="match status" value="1"/>
</dbReference>
<dbReference type="FunFam" id="2.30.30.490:FF:000039">
    <property type="entry name" value="Histone-lysine N-methyltransferase ash1"/>
    <property type="match status" value="1"/>
</dbReference>
<dbReference type="FunFam" id="2.170.270.10:FF:000111">
    <property type="entry name" value="Probable histone-lysine N-methyltransferase lin-59"/>
    <property type="match status" value="1"/>
</dbReference>
<dbReference type="Gene3D" id="2.30.30.490">
    <property type="match status" value="1"/>
</dbReference>
<dbReference type="Gene3D" id="2.170.270.10">
    <property type="entry name" value="SET domain"/>
    <property type="match status" value="1"/>
</dbReference>
<dbReference type="Gene3D" id="3.30.40.10">
    <property type="entry name" value="Zinc/RING finger domain, C3HC4 (zinc finger)"/>
    <property type="match status" value="1"/>
</dbReference>
<dbReference type="InterPro" id="IPR006560">
    <property type="entry name" value="AWS_dom"/>
</dbReference>
<dbReference type="InterPro" id="IPR001025">
    <property type="entry name" value="BAH_dom"/>
</dbReference>
<dbReference type="InterPro" id="IPR043151">
    <property type="entry name" value="BAH_sf"/>
</dbReference>
<dbReference type="InterPro" id="IPR001214">
    <property type="entry name" value="SET_dom"/>
</dbReference>
<dbReference type="InterPro" id="IPR046341">
    <property type="entry name" value="SET_dom_sf"/>
</dbReference>
<dbReference type="InterPro" id="IPR019786">
    <property type="entry name" value="Zinc_finger_PHD-type_CS"/>
</dbReference>
<dbReference type="InterPro" id="IPR011011">
    <property type="entry name" value="Znf_FYVE_PHD"/>
</dbReference>
<dbReference type="InterPro" id="IPR001965">
    <property type="entry name" value="Znf_PHD"/>
</dbReference>
<dbReference type="InterPro" id="IPR019787">
    <property type="entry name" value="Znf_PHD-finger"/>
</dbReference>
<dbReference type="InterPro" id="IPR013083">
    <property type="entry name" value="Znf_RING/FYVE/PHD"/>
</dbReference>
<dbReference type="PANTHER" id="PTHR46147">
    <property type="entry name" value="HISTONE-LYSINE N-METHYLTRANSFERASE ASH1"/>
    <property type="match status" value="1"/>
</dbReference>
<dbReference type="PANTHER" id="PTHR46147:SF3">
    <property type="entry name" value="HISTONE-LYSINE N-METHYLTRANSFERASE ASH1"/>
    <property type="match status" value="1"/>
</dbReference>
<dbReference type="Pfam" id="PF01426">
    <property type="entry name" value="BAH"/>
    <property type="match status" value="1"/>
</dbReference>
<dbReference type="Pfam" id="PF00628">
    <property type="entry name" value="PHD"/>
    <property type="match status" value="1"/>
</dbReference>
<dbReference type="Pfam" id="PF00856">
    <property type="entry name" value="SET"/>
    <property type="match status" value="1"/>
</dbReference>
<dbReference type="SMART" id="SM00570">
    <property type="entry name" value="AWS"/>
    <property type="match status" value="1"/>
</dbReference>
<dbReference type="SMART" id="SM00439">
    <property type="entry name" value="BAH"/>
    <property type="match status" value="1"/>
</dbReference>
<dbReference type="SMART" id="SM00249">
    <property type="entry name" value="PHD"/>
    <property type="match status" value="1"/>
</dbReference>
<dbReference type="SMART" id="SM00317">
    <property type="entry name" value="SET"/>
    <property type="match status" value="1"/>
</dbReference>
<dbReference type="SUPFAM" id="SSF57903">
    <property type="entry name" value="FYVE/PHD zinc finger"/>
    <property type="match status" value="1"/>
</dbReference>
<dbReference type="SUPFAM" id="SSF82199">
    <property type="entry name" value="SET domain"/>
    <property type="match status" value="1"/>
</dbReference>
<dbReference type="PROSITE" id="PS51215">
    <property type="entry name" value="AWS"/>
    <property type="match status" value="1"/>
</dbReference>
<dbReference type="PROSITE" id="PS51038">
    <property type="entry name" value="BAH"/>
    <property type="match status" value="1"/>
</dbReference>
<dbReference type="PROSITE" id="PS50280">
    <property type="entry name" value="SET"/>
    <property type="match status" value="1"/>
</dbReference>
<dbReference type="PROSITE" id="PS01359">
    <property type="entry name" value="ZF_PHD_1"/>
    <property type="match status" value="1"/>
</dbReference>
<dbReference type="PROSITE" id="PS50016">
    <property type="entry name" value="ZF_PHD_2"/>
    <property type="match status" value="1"/>
</dbReference>
<protein>
    <recommendedName>
        <fullName>Probable histone-lysine N-methyltransferase lin-59</fullName>
        <ecNumber>2.1.1.-</ecNumber>
    </recommendedName>
    <alternativeName>
        <fullName>Abnormal cell lineage protein 59</fullName>
    </alternativeName>
</protein>
<proteinExistence type="evidence at transcript level"/>
<reference key="1">
    <citation type="journal article" date="2000" name="Development">
        <title>The bromodomain protein LIN-49 and trithorax-related protein LIN-59 affect development and gene expression in Caenorhabditis elegans.</title>
        <authorList>
            <person name="Chamberlin H.M."/>
            <person name="Thomas J.H."/>
        </authorList>
    </citation>
    <scope>NUCLEOTIDE SEQUENCE [MRNA]</scope>
    <scope>FUNCTION</scope>
    <scope>TISSUE SPECIFICITY</scope>
    <source>
        <strain>Bristol N2</strain>
    </source>
</reference>
<reference key="2">
    <citation type="journal article" date="1998" name="Science">
        <title>Genome sequence of the nematode C. elegans: a platform for investigating biology.</title>
        <authorList>
            <consortium name="The C. elegans sequencing consortium"/>
        </authorList>
    </citation>
    <scope>NUCLEOTIDE SEQUENCE [LARGE SCALE GENOMIC DNA]</scope>
    <source>
        <strain>Bristol N2</strain>
    </source>
</reference>
<name>LIN59_CAEEL</name>
<keyword id="KW-0010">Activator</keyword>
<keyword id="KW-0156">Chromatin regulator</keyword>
<keyword id="KW-0479">Metal-binding</keyword>
<keyword id="KW-0489">Methyltransferase</keyword>
<keyword id="KW-0539">Nucleus</keyword>
<keyword id="KW-1185">Reference proteome</keyword>
<keyword id="KW-0949">S-adenosyl-L-methionine</keyword>
<keyword id="KW-0804">Transcription</keyword>
<keyword id="KW-0805">Transcription regulation</keyword>
<keyword id="KW-0808">Transferase</keyword>
<keyword id="KW-0862">Zinc</keyword>
<keyword id="KW-0863">Zinc-finger</keyword>
<accession>O44757</accession>
<gene>
    <name type="primary">lin-59</name>
    <name type="ORF">T12F5.4</name>
</gene>
<feature type="chain" id="PRO_0000084431" description="Probable histone-lysine N-methyltransferase lin-59">
    <location>
        <begin position="1"/>
        <end position="1312"/>
    </location>
</feature>
<feature type="domain" description="AWS" evidence="5">
    <location>
        <begin position="590"/>
        <end position="635"/>
    </location>
</feature>
<feature type="domain" description="SET" evidence="3">
    <location>
        <begin position="638"/>
        <end position="750"/>
    </location>
</feature>
<feature type="domain" description="BAH" evidence="4">
    <location>
        <begin position="1100"/>
        <end position="1223"/>
    </location>
</feature>
<feature type="zinc finger region" description="PHD-type" evidence="2">
    <location>
        <begin position="967"/>
        <end position="1027"/>
    </location>
</feature>
<feature type="region of interest" description="Disordered" evidence="6">
    <location>
        <begin position="1"/>
        <end position="41"/>
    </location>
</feature>
<feature type="region of interest" description="Disordered" evidence="6">
    <location>
        <begin position="54"/>
        <end position="81"/>
    </location>
</feature>
<feature type="region of interest" description="Disordered" evidence="6">
    <location>
        <begin position="154"/>
        <end position="223"/>
    </location>
</feature>
<feature type="region of interest" description="Disordered" evidence="6">
    <location>
        <begin position="312"/>
        <end position="435"/>
    </location>
</feature>
<feature type="region of interest" description="Disordered" evidence="6">
    <location>
        <begin position="524"/>
        <end position="556"/>
    </location>
</feature>
<feature type="region of interest" description="Disordered" evidence="6">
    <location>
        <begin position="913"/>
        <end position="934"/>
    </location>
</feature>
<feature type="region of interest" description="Disordered" evidence="6">
    <location>
        <begin position="1248"/>
        <end position="1295"/>
    </location>
</feature>
<feature type="compositionally biased region" description="Polar residues" evidence="6">
    <location>
        <begin position="1"/>
        <end position="11"/>
    </location>
</feature>
<feature type="compositionally biased region" description="Polar residues" evidence="6">
    <location>
        <begin position="25"/>
        <end position="36"/>
    </location>
</feature>
<feature type="compositionally biased region" description="Low complexity" evidence="6">
    <location>
        <begin position="54"/>
        <end position="68"/>
    </location>
</feature>
<feature type="compositionally biased region" description="Gly residues" evidence="6">
    <location>
        <begin position="69"/>
        <end position="78"/>
    </location>
</feature>
<feature type="compositionally biased region" description="Low complexity" evidence="6">
    <location>
        <begin position="160"/>
        <end position="176"/>
    </location>
</feature>
<feature type="compositionally biased region" description="Acidic residues" evidence="6">
    <location>
        <begin position="200"/>
        <end position="210"/>
    </location>
</feature>
<feature type="compositionally biased region" description="Basic and acidic residues" evidence="6">
    <location>
        <begin position="312"/>
        <end position="321"/>
    </location>
</feature>
<feature type="compositionally biased region" description="Polar residues" evidence="6">
    <location>
        <begin position="344"/>
        <end position="367"/>
    </location>
</feature>
<feature type="compositionally biased region" description="Basic and acidic residues" evidence="6">
    <location>
        <begin position="371"/>
        <end position="382"/>
    </location>
</feature>
<feature type="compositionally biased region" description="Basic residues" evidence="6">
    <location>
        <begin position="383"/>
        <end position="394"/>
    </location>
</feature>
<feature type="compositionally biased region" description="Basic and acidic residues" evidence="6">
    <location>
        <begin position="395"/>
        <end position="419"/>
    </location>
</feature>
<feature type="compositionally biased region" description="Basic and acidic residues" evidence="6">
    <location>
        <begin position="524"/>
        <end position="535"/>
    </location>
</feature>
<feature type="compositionally biased region" description="Low complexity" evidence="6">
    <location>
        <begin position="1264"/>
        <end position="1281"/>
    </location>
</feature>
<comment type="function">
    <text evidence="1 7">Probable histone methyltransferase (By similarity). Essential protein required to maintain expression of homeotic genes egl-5 and mab-5. May play an analogous role to the trithorax Group (trxG) proteins. TrxG proteins form multiprotein complexes that are required to maintain the transcriptionally active state of homeotic genes throughout development. May act via a modification of chromatin.</text>
</comment>
<comment type="catalytic activity">
    <reaction>
        <text>L-lysyl-[histone] + S-adenosyl-L-methionine = N(6)-methyl-L-lysyl-[histone] + S-adenosyl-L-homocysteine + H(+)</text>
        <dbReference type="Rhea" id="RHEA:10024"/>
        <dbReference type="Rhea" id="RHEA-COMP:9845"/>
        <dbReference type="Rhea" id="RHEA-COMP:9846"/>
        <dbReference type="ChEBI" id="CHEBI:15378"/>
        <dbReference type="ChEBI" id="CHEBI:29969"/>
        <dbReference type="ChEBI" id="CHEBI:57856"/>
        <dbReference type="ChEBI" id="CHEBI:59789"/>
        <dbReference type="ChEBI" id="CHEBI:61929"/>
    </reaction>
</comment>
<comment type="subcellular location">
    <subcellularLocation>
        <location evidence="8">Nucleus</location>
    </subcellularLocation>
</comment>
<comment type="tissue specificity">
    <text evidence="7">Widely expressed throughout embryonic development and into adulthood.</text>
</comment>
<comment type="developmental stage">
    <text>Expressed from mid-blastula.</text>
</comment>
<comment type="similarity">
    <text evidence="3">Belongs to the class V-like SAM-binding methyltransferase superfamily. Histone-lysine methyltransferase family. SET2 subfamily.</text>
</comment>
<organism>
    <name type="scientific">Caenorhabditis elegans</name>
    <dbReference type="NCBI Taxonomy" id="6239"/>
    <lineage>
        <taxon>Eukaryota</taxon>
        <taxon>Metazoa</taxon>
        <taxon>Ecdysozoa</taxon>
        <taxon>Nematoda</taxon>
        <taxon>Chromadorea</taxon>
        <taxon>Rhabditida</taxon>
        <taxon>Rhabditina</taxon>
        <taxon>Rhabditomorpha</taxon>
        <taxon>Rhabditoidea</taxon>
        <taxon>Rhabditidae</taxon>
        <taxon>Peloderinae</taxon>
        <taxon>Caenorhabditis</taxon>
    </lineage>
</organism>
<evidence type="ECO:0000250" key="1"/>
<evidence type="ECO:0000255" key="2">
    <source>
        <dbReference type="PROSITE-ProRule" id="PRU00146"/>
    </source>
</evidence>
<evidence type="ECO:0000255" key="3">
    <source>
        <dbReference type="PROSITE-ProRule" id="PRU00190"/>
    </source>
</evidence>
<evidence type="ECO:0000255" key="4">
    <source>
        <dbReference type="PROSITE-ProRule" id="PRU00370"/>
    </source>
</evidence>
<evidence type="ECO:0000255" key="5">
    <source>
        <dbReference type="PROSITE-ProRule" id="PRU00562"/>
    </source>
</evidence>
<evidence type="ECO:0000256" key="6">
    <source>
        <dbReference type="SAM" id="MobiDB-lite"/>
    </source>
</evidence>
<evidence type="ECO:0000269" key="7">
    <source>
    </source>
</evidence>
<evidence type="ECO:0000305" key="8"/>